<reference key="1">
    <citation type="journal article" date="2011" name="J. Bacteriol.">
        <title>Comparative genomics of 28 Salmonella enterica isolates: evidence for CRISPR-mediated adaptive sublineage evolution.</title>
        <authorList>
            <person name="Fricke W.F."/>
            <person name="Mammel M.K."/>
            <person name="McDermott P.F."/>
            <person name="Tartera C."/>
            <person name="White D.G."/>
            <person name="Leclerc J.E."/>
            <person name="Ravel J."/>
            <person name="Cebula T.A."/>
        </authorList>
    </citation>
    <scope>NUCLEOTIDE SEQUENCE [LARGE SCALE GENOMIC DNA]</scope>
    <source>
        <strain>SL483</strain>
    </source>
</reference>
<gene>
    <name evidence="1" type="primary">nrfA</name>
    <name type="ordered locus">SeAg_B4536</name>
</gene>
<comment type="function">
    <text evidence="1">Catalyzes the reduction of nitrite to ammonia, consuming six electrons in the process.</text>
</comment>
<comment type="catalytic activity">
    <reaction evidence="1">
        <text>6 Fe(III)-[cytochrome c] + NH4(+) + 2 H2O = 6 Fe(II)-[cytochrome c] + nitrite + 8 H(+)</text>
        <dbReference type="Rhea" id="RHEA:13089"/>
        <dbReference type="Rhea" id="RHEA-COMP:10350"/>
        <dbReference type="Rhea" id="RHEA-COMP:14399"/>
        <dbReference type="ChEBI" id="CHEBI:15377"/>
        <dbReference type="ChEBI" id="CHEBI:15378"/>
        <dbReference type="ChEBI" id="CHEBI:16301"/>
        <dbReference type="ChEBI" id="CHEBI:28938"/>
        <dbReference type="ChEBI" id="CHEBI:29033"/>
        <dbReference type="ChEBI" id="CHEBI:29034"/>
        <dbReference type="EC" id="1.7.2.2"/>
    </reaction>
</comment>
<comment type="cofactor">
    <cofactor evidence="1">
        <name>Ca(2+)</name>
        <dbReference type="ChEBI" id="CHEBI:29108"/>
    </cofactor>
    <text evidence="1">Binds 1 Ca(2+) ion per monomer.</text>
</comment>
<comment type="cofactor">
    <cofactor evidence="1">
        <name>heme c</name>
        <dbReference type="ChEBI" id="CHEBI:61717"/>
    </cofactor>
    <text evidence="1">Binds 5 heme c groups covalently per monomer.</text>
</comment>
<comment type="pathway">
    <text evidence="1">Nitrogen metabolism; nitrate reduction (assimilation).</text>
</comment>
<comment type="subcellular location">
    <subcellularLocation>
        <location evidence="1">Periplasm</location>
    </subcellularLocation>
</comment>
<comment type="similarity">
    <text evidence="1">Belongs to the cytochrome c-552 family.</text>
</comment>
<proteinExistence type="inferred from homology"/>
<organism>
    <name type="scientific">Salmonella agona (strain SL483)</name>
    <dbReference type="NCBI Taxonomy" id="454166"/>
    <lineage>
        <taxon>Bacteria</taxon>
        <taxon>Pseudomonadati</taxon>
        <taxon>Pseudomonadota</taxon>
        <taxon>Gammaproteobacteria</taxon>
        <taxon>Enterobacterales</taxon>
        <taxon>Enterobacteriaceae</taxon>
        <taxon>Salmonella</taxon>
    </lineage>
</organism>
<feature type="signal peptide" evidence="1">
    <location>
        <begin position="1"/>
        <end position="26"/>
    </location>
</feature>
<feature type="chain" id="PRO_1000138217" description="Cytochrome c-552">
    <location>
        <begin position="27"/>
        <end position="478"/>
    </location>
</feature>
<feature type="binding site" description="axial binding residue" evidence="1">
    <location>
        <position position="94"/>
    </location>
    <ligand>
        <name>heme c</name>
        <dbReference type="ChEBI" id="CHEBI:61717"/>
        <label>3</label>
    </ligand>
    <ligandPart>
        <name>Fe</name>
        <dbReference type="ChEBI" id="CHEBI:18248"/>
    </ligandPart>
</feature>
<feature type="binding site" description="covalent" evidence="1">
    <location>
        <position position="122"/>
    </location>
    <ligand>
        <name>heme</name>
        <dbReference type="ChEBI" id="CHEBI:30413"/>
        <label>1</label>
    </ligand>
</feature>
<feature type="binding site" description="covalent" evidence="1">
    <location>
        <position position="125"/>
    </location>
    <ligand>
        <name>heme</name>
        <dbReference type="ChEBI" id="CHEBI:30413"/>
        <label>1</label>
    </ligand>
</feature>
<feature type="binding site" description="axial binding residue" evidence="1">
    <location>
        <position position="126"/>
    </location>
    <ligand>
        <name>heme</name>
        <dbReference type="ChEBI" id="CHEBI:30413"/>
        <label>1</label>
    </ligand>
    <ligandPart>
        <name>Fe</name>
        <dbReference type="ChEBI" id="CHEBI:18248"/>
    </ligandPart>
</feature>
<feature type="binding site" description="covalent" evidence="1">
    <location>
        <position position="160"/>
    </location>
    <ligand>
        <name>heme c</name>
        <dbReference type="ChEBI" id="CHEBI:61717"/>
        <label>2</label>
    </ligand>
</feature>
<feature type="binding site" description="covalent" evidence="1">
    <location>
        <position position="163"/>
    </location>
    <ligand>
        <name>heme c</name>
        <dbReference type="ChEBI" id="CHEBI:61717"/>
        <label>2</label>
    </ligand>
</feature>
<feature type="binding site" description="axial binding residue" evidence="1">
    <location>
        <position position="164"/>
    </location>
    <ligand>
        <name>heme c</name>
        <dbReference type="ChEBI" id="CHEBI:61717"/>
        <label>2</label>
    </ligand>
    <ligandPart>
        <name>Fe</name>
        <dbReference type="ChEBI" id="CHEBI:18248"/>
    </ligandPart>
</feature>
<feature type="binding site" description="covalent" evidence="1">
    <location>
        <position position="209"/>
    </location>
    <ligand>
        <name>heme c</name>
        <dbReference type="ChEBI" id="CHEBI:61717"/>
        <label>3</label>
    </ligand>
</feature>
<feature type="binding site" description="covalent" evidence="1">
    <location>
        <position position="212"/>
    </location>
    <ligand>
        <name>heme c</name>
        <dbReference type="ChEBI" id="CHEBI:61717"/>
        <label>3</label>
    </ligand>
</feature>
<feature type="binding site" description="axial binding residue" evidence="1">
    <location>
        <position position="213"/>
    </location>
    <ligand>
        <name>heme c</name>
        <dbReference type="ChEBI" id="CHEBI:61717"/>
        <label>3</label>
    </ligand>
    <ligandPart>
        <name>Fe</name>
        <dbReference type="ChEBI" id="CHEBI:18248"/>
    </ligandPart>
</feature>
<feature type="binding site" evidence="1">
    <location>
        <position position="215"/>
    </location>
    <ligand>
        <name>Ca(2+)</name>
        <dbReference type="ChEBI" id="CHEBI:29108"/>
    </ligand>
</feature>
<feature type="binding site" evidence="1">
    <location>
        <position position="216"/>
    </location>
    <ligand>
        <name>Ca(2+)</name>
        <dbReference type="ChEBI" id="CHEBI:29108"/>
    </ligand>
</feature>
<feature type="binding site" evidence="1">
    <location>
        <position position="216"/>
    </location>
    <ligand>
        <name>substrate</name>
    </ligand>
</feature>
<feature type="binding site" evidence="1">
    <location>
        <position position="261"/>
    </location>
    <ligand>
        <name>Ca(2+)</name>
        <dbReference type="ChEBI" id="CHEBI:29108"/>
    </ligand>
</feature>
<feature type="binding site" evidence="1">
    <location>
        <position position="263"/>
    </location>
    <ligand>
        <name>Ca(2+)</name>
        <dbReference type="ChEBI" id="CHEBI:29108"/>
    </ligand>
</feature>
<feature type="binding site" evidence="1">
    <location>
        <position position="264"/>
    </location>
    <ligand>
        <name>substrate</name>
    </ligand>
</feature>
<feature type="binding site" description="axial binding residue" evidence="1">
    <location>
        <position position="275"/>
    </location>
    <ligand>
        <name>heme c</name>
        <dbReference type="ChEBI" id="CHEBI:61717"/>
        <label>5</label>
    </ligand>
    <ligandPart>
        <name>Fe</name>
        <dbReference type="ChEBI" id="CHEBI:18248"/>
    </ligandPart>
</feature>
<feature type="binding site" description="covalent" evidence="1">
    <location>
        <position position="282"/>
    </location>
    <ligand>
        <name>heme c</name>
        <dbReference type="ChEBI" id="CHEBI:61717"/>
        <label>4</label>
    </ligand>
</feature>
<feature type="binding site" description="covalent" evidence="1">
    <location>
        <position position="285"/>
    </location>
    <ligand>
        <name>heme c</name>
        <dbReference type="ChEBI" id="CHEBI:61717"/>
        <label>4</label>
    </ligand>
</feature>
<feature type="binding site" description="axial binding residue" evidence="1">
    <location>
        <position position="286"/>
    </location>
    <ligand>
        <name>heme c</name>
        <dbReference type="ChEBI" id="CHEBI:61717"/>
        <label>4</label>
    </ligand>
    <ligandPart>
        <name>Fe</name>
        <dbReference type="ChEBI" id="CHEBI:18248"/>
    </ligandPart>
</feature>
<feature type="binding site" description="axial binding residue" evidence="1">
    <location>
        <position position="301"/>
    </location>
    <ligand>
        <name>heme c</name>
        <dbReference type="ChEBI" id="CHEBI:61717"/>
        <label>2</label>
    </ligand>
    <ligandPart>
        <name>Fe</name>
        <dbReference type="ChEBI" id="CHEBI:18248"/>
    </ligandPart>
</feature>
<feature type="binding site" description="covalent" evidence="1">
    <location>
        <position position="314"/>
    </location>
    <ligand>
        <name>heme c</name>
        <dbReference type="ChEBI" id="CHEBI:61717"/>
        <label>5</label>
    </ligand>
</feature>
<feature type="binding site" description="covalent" evidence="1">
    <location>
        <position position="317"/>
    </location>
    <ligand>
        <name>heme c</name>
        <dbReference type="ChEBI" id="CHEBI:61717"/>
        <label>5</label>
    </ligand>
</feature>
<feature type="binding site" description="axial binding residue" evidence="1">
    <location>
        <position position="318"/>
    </location>
    <ligand>
        <name>heme c</name>
        <dbReference type="ChEBI" id="CHEBI:61717"/>
        <label>5</label>
    </ligand>
    <ligandPart>
        <name>Fe</name>
        <dbReference type="ChEBI" id="CHEBI:18248"/>
    </ligandPart>
</feature>
<feature type="binding site" description="axial binding residue" evidence="1">
    <location>
        <position position="393"/>
    </location>
    <ligand>
        <name>heme c</name>
        <dbReference type="ChEBI" id="CHEBI:61717"/>
        <label>4</label>
    </ligand>
    <ligandPart>
        <name>Fe</name>
        <dbReference type="ChEBI" id="CHEBI:18248"/>
    </ligandPart>
</feature>
<protein>
    <recommendedName>
        <fullName evidence="1">Cytochrome c-552</fullName>
        <ecNumber evidence="1">1.7.2.2</ecNumber>
    </recommendedName>
    <alternativeName>
        <fullName evidence="1">Ammonia-forming cytochrome c nitrite reductase</fullName>
        <shortName evidence="1">Cytochrome c nitrite reductase</shortName>
    </alternativeName>
</protein>
<name>NRFA_SALA4</name>
<dbReference type="EC" id="1.7.2.2" evidence="1"/>
<dbReference type="EMBL" id="CP001138">
    <property type="protein sequence ID" value="ACH48799.1"/>
    <property type="molecule type" value="Genomic_DNA"/>
</dbReference>
<dbReference type="RefSeq" id="WP_000101777.1">
    <property type="nucleotide sequence ID" value="NC_011149.1"/>
</dbReference>
<dbReference type="SMR" id="B5F2F2"/>
<dbReference type="KEGG" id="sea:SeAg_B4536"/>
<dbReference type="HOGENOM" id="CLU_035040_1_0_6"/>
<dbReference type="UniPathway" id="UPA00653"/>
<dbReference type="Proteomes" id="UP000008819">
    <property type="component" value="Chromosome"/>
</dbReference>
<dbReference type="GO" id="GO:0030288">
    <property type="term" value="C:outer membrane-bounded periplasmic space"/>
    <property type="evidence" value="ECO:0007669"/>
    <property type="project" value="TreeGrafter"/>
</dbReference>
<dbReference type="GO" id="GO:0005509">
    <property type="term" value="F:calcium ion binding"/>
    <property type="evidence" value="ECO:0007669"/>
    <property type="project" value="UniProtKB-UniRule"/>
</dbReference>
<dbReference type="GO" id="GO:0020037">
    <property type="term" value="F:heme binding"/>
    <property type="evidence" value="ECO:0007669"/>
    <property type="project" value="InterPro"/>
</dbReference>
<dbReference type="GO" id="GO:0005506">
    <property type="term" value="F:iron ion binding"/>
    <property type="evidence" value="ECO:0007669"/>
    <property type="project" value="UniProtKB-UniRule"/>
</dbReference>
<dbReference type="GO" id="GO:0042279">
    <property type="term" value="F:nitrite reductase (cytochrome, ammonia-forming) activity"/>
    <property type="evidence" value="ECO:0007669"/>
    <property type="project" value="UniProtKB-UniRule"/>
</dbReference>
<dbReference type="GO" id="GO:0019645">
    <property type="term" value="P:anaerobic electron transport chain"/>
    <property type="evidence" value="ECO:0007669"/>
    <property type="project" value="TreeGrafter"/>
</dbReference>
<dbReference type="GO" id="GO:0042128">
    <property type="term" value="P:nitrate assimilation"/>
    <property type="evidence" value="ECO:0007669"/>
    <property type="project" value="UniProtKB-UniRule"/>
</dbReference>
<dbReference type="CDD" id="cd00548">
    <property type="entry name" value="NrfA-like"/>
    <property type="match status" value="1"/>
</dbReference>
<dbReference type="FunFam" id="1.10.1130.10:FF:000002">
    <property type="entry name" value="Cytochrome c-552"/>
    <property type="match status" value="1"/>
</dbReference>
<dbReference type="FunFam" id="1.20.140.10:FF:000014">
    <property type="entry name" value="Cytochrome c-552"/>
    <property type="match status" value="1"/>
</dbReference>
<dbReference type="Gene3D" id="1.20.140.10">
    <property type="entry name" value="Butyryl-CoA Dehydrogenase, subunit A, domain 3"/>
    <property type="match status" value="1"/>
</dbReference>
<dbReference type="Gene3D" id="1.10.1130.10">
    <property type="entry name" value="Flavocytochrome C3, Chain A"/>
    <property type="match status" value="1"/>
</dbReference>
<dbReference type="HAMAP" id="MF_01182">
    <property type="entry name" value="Cytochrom_C552"/>
    <property type="match status" value="1"/>
</dbReference>
<dbReference type="InterPro" id="IPR003321">
    <property type="entry name" value="Cyt_c552"/>
</dbReference>
<dbReference type="InterPro" id="IPR017570">
    <property type="entry name" value="Cyt_c_NO2Rdtase_formate-dep"/>
</dbReference>
<dbReference type="InterPro" id="IPR036280">
    <property type="entry name" value="Multihaem_cyt_sf"/>
</dbReference>
<dbReference type="NCBIfam" id="TIGR03152">
    <property type="entry name" value="cyto_c552_HCOOH"/>
    <property type="match status" value="1"/>
</dbReference>
<dbReference type="NCBIfam" id="NF008339">
    <property type="entry name" value="PRK11125.1"/>
    <property type="match status" value="1"/>
</dbReference>
<dbReference type="PANTHER" id="PTHR30633:SF0">
    <property type="entry name" value="CYTOCHROME C-552"/>
    <property type="match status" value="1"/>
</dbReference>
<dbReference type="PANTHER" id="PTHR30633">
    <property type="entry name" value="CYTOCHROME C-552 RESPIRATORY NITRITE REDUCTASE"/>
    <property type="match status" value="1"/>
</dbReference>
<dbReference type="Pfam" id="PF02335">
    <property type="entry name" value="Cytochrom_C552"/>
    <property type="match status" value="1"/>
</dbReference>
<dbReference type="PIRSF" id="PIRSF000243">
    <property type="entry name" value="Cyt_c552"/>
    <property type="match status" value="1"/>
</dbReference>
<dbReference type="SUPFAM" id="SSF48695">
    <property type="entry name" value="Multiheme cytochromes"/>
    <property type="match status" value="1"/>
</dbReference>
<dbReference type="PROSITE" id="PS51008">
    <property type="entry name" value="MULTIHEME_CYTC"/>
    <property type="match status" value="1"/>
</dbReference>
<keyword id="KW-0106">Calcium</keyword>
<keyword id="KW-0249">Electron transport</keyword>
<keyword id="KW-0349">Heme</keyword>
<keyword id="KW-0408">Iron</keyword>
<keyword id="KW-0479">Metal-binding</keyword>
<keyword id="KW-0560">Oxidoreductase</keyword>
<keyword id="KW-0574">Periplasm</keyword>
<keyword id="KW-0732">Signal</keyword>
<keyword id="KW-0813">Transport</keyword>
<accession>B5F2F2</accession>
<evidence type="ECO:0000255" key="1">
    <source>
        <dbReference type="HAMAP-Rule" id="MF_01182"/>
    </source>
</evidence>
<sequence>MARKTLRARRFFSLIFPFFFITSVYAEQTPESAKTVTVEAKNETFAPQHPDQYQSWKATSEQSAREDALAEDPRLVILWAGYPFSRDYNKPRGHAYAVTDVRETLRTGAPKTAEDGPLPMACWSCKSPDVARLIQQEGEDGYFHGKWARGGPEIVNDLGCADCHNTASDDFAQGKPALTLSRPYAERAMEAIGKPFDKAGRFDQQSMVCGQCHVEYYFDGKNKAVKFPWDEGMKVENMEQYYDTIAFSDWTNSLSKTPMLKAQHPEYETWSAGIHGRNNVTCIDCHMPKVQNAEGKLYTDHKIGNPFDNFAQTCANCHTQDKASLQKVVAERKQAIHDLKIKVEDQLVHAHFEAKAAWDAGATDAEMKPILNDIRHAQWRWDLAIASHGIHMHAPEEGLRMLGSAMDKAADARTKLARLLATKGITHEIPLPDISTKEKAQKAIGLNMQQINAEKQDFLKTVVPQWEDQARKNGLLSQ</sequence>